<evidence type="ECO:0000305" key="1">
    <source>
    </source>
</evidence>
<reference key="1">
    <citation type="journal article" date="1997" name="Science">
        <title>The complete genome sequence of Escherichia coli K-12.</title>
        <authorList>
            <person name="Blattner F.R."/>
            <person name="Plunkett G. III"/>
            <person name="Bloch C.A."/>
            <person name="Perna N.T."/>
            <person name="Burland V."/>
            <person name="Riley M."/>
            <person name="Collado-Vides J."/>
            <person name="Glasner J.D."/>
            <person name="Rode C.K."/>
            <person name="Mayhew G.F."/>
            <person name="Gregor J."/>
            <person name="Davis N.W."/>
            <person name="Kirkpatrick H.A."/>
            <person name="Goeden M.A."/>
            <person name="Rose D.J."/>
            <person name="Mau B."/>
            <person name="Shao Y."/>
        </authorList>
    </citation>
    <scope>NUCLEOTIDE SEQUENCE [LARGE SCALE GENOMIC DNA]</scope>
    <source>
        <strain>K12 / MG1655 / ATCC 47076</strain>
    </source>
</reference>
<reference key="2">
    <citation type="journal article" date="2006" name="Mol. Syst. Biol.">
        <title>Highly accurate genome sequences of Escherichia coli K-12 strains MG1655 and W3110.</title>
        <authorList>
            <person name="Hayashi K."/>
            <person name="Morooka N."/>
            <person name="Yamamoto Y."/>
            <person name="Fujita K."/>
            <person name="Isono K."/>
            <person name="Choi S."/>
            <person name="Ohtsubo E."/>
            <person name="Baba T."/>
            <person name="Wanner B.L."/>
            <person name="Mori H."/>
            <person name="Horiuchi T."/>
        </authorList>
    </citation>
    <scope>NUCLEOTIDE SEQUENCE [LARGE SCALE GENOMIC DNA]</scope>
    <source>
        <strain>K12 / W3110 / ATCC 27325 / DSM 5911</strain>
    </source>
</reference>
<accession>P52124</accession>
<accession>Q2MAE6</accession>
<name>YFJI_ECOLI</name>
<organism>
    <name type="scientific">Escherichia coli (strain K12)</name>
    <dbReference type="NCBI Taxonomy" id="83333"/>
    <lineage>
        <taxon>Bacteria</taxon>
        <taxon>Pseudomonadati</taxon>
        <taxon>Pseudomonadota</taxon>
        <taxon>Gammaproteobacteria</taxon>
        <taxon>Enterobacterales</taxon>
        <taxon>Enterobacteriaceae</taxon>
        <taxon>Escherichia</taxon>
    </lineage>
</organism>
<gene>
    <name type="primary">yfjI</name>
    <name type="ordered locus">b2625</name>
    <name type="ordered locus">JW2605</name>
</gene>
<sequence>MFNGRPFPVDAFPKIIRNAIYEVEQHTQAPQGLIAASALGVISLACQNRIDVCRLNNLRGPVSLFLMTLAESGERKSTVDKLLMKPLYQLEEDLFEKYTHDLTAWRNDEAIFNIEKKALMSKLKSDIRRNKDHLATNERLKELLTTNPKAPVRFKFLFNDATPAAIKAHLCGHWRSVGIMSDEAGIIFNGYTLNELPFINKMWDGSIFTVERKNEPEKLIRDARITLSLMVQPNVFKGYIDRKGDMAKGIGFFARCLMCQPASTQGNRKISNPIFSNEHLPVFHQRLMEIVNESIIKINENNRICLRFSAEAERHWIEFYNQVESEMRMIGLLYDFKDYASKMAENMARLAALLHYFSGDGGDISVTAVKAAVEIVAWYIEEYIRLFSKKEEFSLDVSEADELYCWIKDYCTQKFSSCIKKNIILQFGPNKFRNRDKANELIRILISQNKIFISSWGKTKIINITHCVF</sequence>
<proteinExistence type="predicted"/>
<comment type="miscellaneous">
    <text evidence="1">Part of the CP4-57 prophage.</text>
</comment>
<protein>
    <recommendedName>
        <fullName>Protein YfjI</fullName>
    </recommendedName>
</protein>
<dbReference type="EMBL" id="U36840">
    <property type="protein sequence ID" value="AAA79794.1"/>
    <property type="molecule type" value="Genomic_DNA"/>
</dbReference>
<dbReference type="EMBL" id="U00096">
    <property type="protein sequence ID" value="AAC75673.1"/>
    <property type="molecule type" value="Genomic_DNA"/>
</dbReference>
<dbReference type="EMBL" id="AP009048">
    <property type="protein sequence ID" value="BAE76760.1"/>
    <property type="molecule type" value="Genomic_DNA"/>
</dbReference>
<dbReference type="PIR" id="T08637">
    <property type="entry name" value="T08637"/>
</dbReference>
<dbReference type="RefSeq" id="NP_417114.1">
    <property type="nucleotide sequence ID" value="NC_000913.3"/>
</dbReference>
<dbReference type="RefSeq" id="WP_000481742.1">
    <property type="nucleotide sequence ID" value="NZ_LN832404.1"/>
</dbReference>
<dbReference type="BioGRID" id="4263281">
    <property type="interactions" value="20"/>
</dbReference>
<dbReference type="FunCoup" id="P52124">
    <property type="interactions" value="52"/>
</dbReference>
<dbReference type="IntAct" id="P52124">
    <property type="interactions" value="2"/>
</dbReference>
<dbReference type="STRING" id="511145.b2625"/>
<dbReference type="PaxDb" id="511145-b2625"/>
<dbReference type="DNASU" id="944764"/>
<dbReference type="EnsemblBacteria" id="AAC75673">
    <property type="protein sequence ID" value="AAC75673"/>
    <property type="gene ID" value="b2625"/>
</dbReference>
<dbReference type="GeneID" id="944764"/>
<dbReference type="KEGG" id="ecj:JW2605"/>
<dbReference type="KEGG" id="eco:b2625"/>
<dbReference type="KEGG" id="ecoc:C3026_14525"/>
<dbReference type="PATRIC" id="fig|511145.12.peg.2721"/>
<dbReference type="EchoBASE" id="EB2987"/>
<dbReference type="eggNOG" id="COG4983">
    <property type="taxonomic scope" value="Bacteria"/>
</dbReference>
<dbReference type="HOGENOM" id="CLU_020866_2_1_6"/>
<dbReference type="InParanoid" id="P52124"/>
<dbReference type="OMA" id="ECAKDHA"/>
<dbReference type="OrthoDB" id="9067983at2"/>
<dbReference type="BioCyc" id="EcoCyc:G7360-MONOMER"/>
<dbReference type="PRO" id="PR:P52124"/>
<dbReference type="Proteomes" id="UP000000625">
    <property type="component" value="Chromosome"/>
</dbReference>
<dbReference type="GO" id="GO:0005829">
    <property type="term" value="C:cytosol"/>
    <property type="evidence" value="ECO:0000314"/>
    <property type="project" value="EcoCyc"/>
</dbReference>
<dbReference type="InterPro" id="IPR025048">
    <property type="entry name" value="DUF3987"/>
</dbReference>
<dbReference type="Pfam" id="PF13148">
    <property type="entry name" value="DUF3987"/>
    <property type="match status" value="1"/>
</dbReference>
<feature type="chain" id="PRO_0000169274" description="Protein YfjI">
    <location>
        <begin position="1"/>
        <end position="469"/>
    </location>
</feature>
<keyword id="KW-1185">Reference proteome</keyword>